<keyword id="KW-0328">Glycosyltransferase</keyword>
<keyword id="KW-0441">Lipid A biosynthesis</keyword>
<keyword id="KW-0444">Lipid biosynthesis</keyword>
<keyword id="KW-0443">Lipid metabolism</keyword>
<keyword id="KW-0808">Transferase</keyword>
<accession>C3K6G9</accession>
<reference key="1">
    <citation type="journal article" date="2009" name="Genome Biol.">
        <title>Genomic and genetic analyses of diversity and plant interactions of Pseudomonas fluorescens.</title>
        <authorList>
            <person name="Silby M.W."/>
            <person name="Cerdeno-Tarraga A.M."/>
            <person name="Vernikos G.S."/>
            <person name="Giddens S.R."/>
            <person name="Jackson R.W."/>
            <person name="Preston G.M."/>
            <person name="Zhang X.-X."/>
            <person name="Moon C.D."/>
            <person name="Gehrig S.M."/>
            <person name="Godfrey S.A.C."/>
            <person name="Knight C.G."/>
            <person name="Malone J.G."/>
            <person name="Robinson Z."/>
            <person name="Spiers A.J."/>
            <person name="Harris S."/>
            <person name="Challis G.L."/>
            <person name="Yaxley A.M."/>
            <person name="Harris D."/>
            <person name="Seeger K."/>
            <person name="Murphy L."/>
            <person name="Rutter S."/>
            <person name="Squares R."/>
            <person name="Quail M.A."/>
            <person name="Saunders E."/>
            <person name="Mavromatis K."/>
            <person name="Brettin T.S."/>
            <person name="Bentley S.D."/>
            <person name="Hothersall J."/>
            <person name="Stephens E."/>
            <person name="Thomas C.M."/>
            <person name="Parkhill J."/>
            <person name="Levy S.B."/>
            <person name="Rainey P.B."/>
            <person name="Thomson N.R."/>
        </authorList>
    </citation>
    <scope>NUCLEOTIDE SEQUENCE [LARGE SCALE GENOMIC DNA]</scope>
    <source>
        <strain>SBW25</strain>
    </source>
</reference>
<proteinExistence type="inferred from homology"/>
<dbReference type="EC" id="2.4.1.182" evidence="1"/>
<dbReference type="EMBL" id="AM181176">
    <property type="protein sequence ID" value="CAY47540.1"/>
    <property type="molecule type" value="Genomic_DNA"/>
</dbReference>
<dbReference type="RefSeq" id="WP_012722604.1">
    <property type="nucleotide sequence ID" value="NC_012660.1"/>
</dbReference>
<dbReference type="SMR" id="C3K6G9"/>
<dbReference type="STRING" id="294.SRM1_01142"/>
<dbReference type="CAZy" id="GT19">
    <property type="family name" value="Glycosyltransferase Family 19"/>
</dbReference>
<dbReference type="GeneID" id="93462899"/>
<dbReference type="PATRIC" id="fig|216595.4.peg.1514"/>
<dbReference type="eggNOG" id="COG0763">
    <property type="taxonomic scope" value="Bacteria"/>
</dbReference>
<dbReference type="HOGENOM" id="CLU_036577_3_0_6"/>
<dbReference type="OrthoDB" id="9801642at2"/>
<dbReference type="UniPathway" id="UPA00973"/>
<dbReference type="GO" id="GO:0016020">
    <property type="term" value="C:membrane"/>
    <property type="evidence" value="ECO:0007669"/>
    <property type="project" value="GOC"/>
</dbReference>
<dbReference type="GO" id="GO:0008915">
    <property type="term" value="F:lipid-A-disaccharide synthase activity"/>
    <property type="evidence" value="ECO:0007669"/>
    <property type="project" value="UniProtKB-UniRule"/>
</dbReference>
<dbReference type="GO" id="GO:0005543">
    <property type="term" value="F:phospholipid binding"/>
    <property type="evidence" value="ECO:0007669"/>
    <property type="project" value="TreeGrafter"/>
</dbReference>
<dbReference type="GO" id="GO:0009245">
    <property type="term" value="P:lipid A biosynthetic process"/>
    <property type="evidence" value="ECO:0007669"/>
    <property type="project" value="UniProtKB-UniRule"/>
</dbReference>
<dbReference type="Gene3D" id="3.40.50.2000">
    <property type="entry name" value="Glycogen Phosphorylase B"/>
    <property type="match status" value="1"/>
</dbReference>
<dbReference type="HAMAP" id="MF_00392">
    <property type="entry name" value="LpxB"/>
    <property type="match status" value="1"/>
</dbReference>
<dbReference type="InterPro" id="IPR003835">
    <property type="entry name" value="Glyco_trans_19"/>
</dbReference>
<dbReference type="NCBIfam" id="TIGR00215">
    <property type="entry name" value="lpxB"/>
    <property type="match status" value="1"/>
</dbReference>
<dbReference type="PANTHER" id="PTHR30372">
    <property type="entry name" value="LIPID-A-DISACCHARIDE SYNTHASE"/>
    <property type="match status" value="1"/>
</dbReference>
<dbReference type="PANTHER" id="PTHR30372:SF4">
    <property type="entry name" value="LIPID-A-DISACCHARIDE SYNTHASE, MITOCHONDRIAL-RELATED"/>
    <property type="match status" value="1"/>
</dbReference>
<dbReference type="Pfam" id="PF02684">
    <property type="entry name" value="LpxB"/>
    <property type="match status" value="1"/>
</dbReference>
<dbReference type="SUPFAM" id="SSF53756">
    <property type="entry name" value="UDP-Glycosyltransferase/glycogen phosphorylase"/>
    <property type="match status" value="1"/>
</dbReference>
<protein>
    <recommendedName>
        <fullName evidence="1">Lipid-A-disaccharide synthase</fullName>
        <ecNumber evidence="1">2.4.1.182</ecNumber>
    </recommendedName>
</protein>
<evidence type="ECO:0000255" key="1">
    <source>
        <dbReference type="HAMAP-Rule" id="MF_00392"/>
    </source>
</evidence>
<feature type="chain" id="PRO_1000205846" description="Lipid-A-disaccharide synthase">
    <location>
        <begin position="1"/>
        <end position="379"/>
    </location>
</feature>
<name>LPXB_PSEFS</name>
<organism>
    <name type="scientific">Pseudomonas fluorescens (strain SBW25)</name>
    <dbReference type="NCBI Taxonomy" id="216595"/>
    <lineage>
        <taxon>Bacteria</taxon>
        <taxon>Pseudomonadati</taxon>
        <taxon>Pseudomonadota</taxon>
        <taxon>Gammaproteobacteria</taxon>
        <taxon>Pseudomonadales</taxon>
        <taxon>Pseudomonadaceae</taxon>
        <taxon>Pseudomonas</taxon>
    </lineage>
</organism>
<gene>
    <name evidence="1" type="primary">lpxB</name>
    <name type="ordered locus">PFLU_1283</name>
</gene>
<comment type="function">
    <text evidence="1">Condensation of UDP-2,3-diacylglucosamine and 2,3-diacylglucosamine-1-phosphate to form lipid A disaccharide, a precursor of lipid A, a phosphorylated glycolipid that anchors the lipopolysaccharide to the outer membrane of the cell.</text>
</comment>
<comment type="catalytic activity">
    <reaction evidence="1">
        <text>a lipid X + a UDP-2-N,3-O-bis[(3R)-3-hydroxyacyl]-alpha-D-glucosamine = a lipid A disaccharide + UDP + H(+)</text>
        <dbReference type="Rhea" id="RHEA:67828"/>
        <dbReference type="ChEBI" id="CHEBI:15378"/>
        <dbReference type="ChEBI" id="CHEBI:58223"/>
        <dbReference type="ChEBI" id="CHEBI:137748"/>
        <dbReference type="ChEBI" id="CHEBI:176338"/>
        <dbReference type="ChEBI" id="CHEBI:176343"/>
        <dbReference type="EC" id="2.4.1.182"/>
    </reaction>
</comment>
<comment type="pathway">
    <text evidence="1">Bacterial outer membrane biogenesis; LPS lipid A biosynthesis.</text>
</comment>
<comment type="similarity">
    <text evidence="1">Belongs to the LpxB family.</text>
</comment>
<sequence>MANLRIALVAGEASGDILGAGLMRALKAQHPAVQFIGVGGPLMQAEGLTSYFPMERLSVMGLVEVLGRLRELLARRKLLIQTLIEEKPDVFIGIDAPDFTLTLELKLRQAGIKTVHYVSPSVWAWRQKRVLKIREGCDLMLTLLPFEARFYEEKGVPVRFVGHTLADTIPLQADRTAARAELGLPDGPLVALMPGSRGGEVGRLASVFFDAAERLQALKPGVRFVLPCASPQRRVQIETLLEGRNLPLTLLDGQSHLALAACDAVLIASGTATLEALLYKRPMVVAYRLAPLTFWILKRMVKSPYISLPNLLAQRLLVPELLQDDATPEALAQTLLPLIDGGEEQTRGFDDIHRTLRRDASNQAADAVLSLIGQKQEAL</sequence>